<reference key="1">
    <citation type="submission" date="2007-03" db="EMBL/GenBank/DDBJ databases">
        <title>Sequencing analysis of Barbarea verna chloroplast DNA.</title>
        <authorList>
            <person name="Hosouchi T."/>
            <person name="Tsuruoka H."/>
            <person name="Kotani H."/>
        </authorList>
    </citation>
    <scope>NUCLEOTIDE SEQUENCE [LARGE SCALE GENOMIC DNA]</scope>
</reference>
<proteinExistence type="inferred from homology"/>
<keyword id="KW-0150">Chloroplast</keyword>
<keyword id="KW-0472">Membrane</keyword>
<keyword id="KW-0602">Photosynthesis</keyword>
<keyword id="KW-0604">Photosystem II</keyword>
<keyword id="KW-0934">Plastid</keyword>
<keyword id="KW-0674">Reaction center</keyword>
<keyword id="KW-0793">Thylakoid</keyword>
<keyword id="KW-0812">Transmembrane</keyword>
<keyword id="KW-1133">Transmembrane helix</keyword>
<gene>
    <name evidence="1" type="primary">psbM</name>
</gene>
<organism>
    <name type="scientific">Barbarea verna</name>
    <name type="common">Land cress</name>
    <name type="synonym">Erysimum vernum</name>
    <dbReference type="NCBI Taxonomy" id="50458"/>
    <lineage>
        <taxon>Eukaryota</taxon>
        <taxon>Viridiplantae</taxon>
        <taxon>Streptophyta</taxon>
        <taxon>Embryophyta</taxon>
        <taxon>Tracheophyta</taxon>
        <taxon>Spermatophyta</taxon>
        <taxon>Magnoliopsida</taxon>
        <taxon>eudicotyledons</taxon>
        <taxon>Gunneridae</taxon>
        <taxon>Pentapetalae</taxon>
        <taxon>rosids</taxon>
        <taxon>malvids</taxon>
        <taxon>Brassicales</taxon>
        <taxon>Brassicaceae</taxon>
        <taxon>Cardamineae</taxon>
        <taxon>Barbarea</taxon>
    </lineage>
</organism>
<feature type="chain" id="PRO_0000325720" description="Photosystem II reaction center protein M">
    <location>
        <begin position="1"/>
        <end position="34"/>
    </location>
</feature>
<feature type="transmembrane region" description="Helical" evidence="1">
    <location>
        <begin position="5"/>
        <end position="25"/>
    </location>
</feature>
<name>PSBM_BARVE</name>
<sequence length="34" mass="3783">MEVNILAFIATALFILVPTAFLLIIYVKTVSQND</sequence>
<evidence type="ECO:0000255" key="1">
    <source>
        <dbReference type="HAMAP-Rule" id="MF_00438"/>
    </source>
</evidence>
<protein>
    <recommendedName>
        <fullName evidence="1">Photosystem II reaction center protein M</fullName>
        <shortName evidence="1">PSII-M</shortName>
    </recommendedName>
</protein>
<geneLocation type="chloroplast"/>
<dbReference type="EMBL" id="AP009370">
    <property type="protein sequence ID" value="BAF50104.1"/>
    <property type="molecule type" value="Genomic_DNA"/>
</dbReference>
<dbReference type="RefSeq" id="YP_001123280.1">
    <property type="nucleotide sequence ID" value="NC_009269.1"/>
</dbReference>
<dbReference type="SMR" id="A4QK99"/>
<dbReference type="GeneID" id="4961856"/>
<dbReference type="GO" id="GO:0009535">
    <property type="term" value="C:chloroplast thylakoid membrane"/>
    <property type="evidence" value="ECO:0007669"/>
    <property type="project" value="UniProtKB-SubCell"/>
</dbReference>
<dbReference type="GO" id="GO:0009523">
    <property type="term" value="C:photosystem II"/>
    <property type="evidence" value="ECO:0007669"/>
    <property type="project" value="UniProtKB-KW"/>
</dbReference>
<dbReference type="GO" id="GO:0019684">
    <property type="term" value="P:photosynthesis, light reaction"/>
    <property type="evidence" value="ECO:0007669"/>
    <property type="project" value="InterPro"/>
</dbReference>
<dbReference type="HAMAP" id="MF_00438">
    <property type="entry name" value="PSII_PsbM"/>
    <property type="match status" value="1"/>
</dbReference>
<dbReference type="InterPro" id="IPR007826">
    <property type="entry name" value="PSII_PsbM"/>
</dbReference>
<dbReference type="InterPro" id="IPR037269">
    <property type="entry name" value="PSII_PsbM_sf"/>
</dbReference>
<dbReference type="NCBIfam" id="TIGR03038">
    <property type="entry name" value="PS_II_psbM"/>
    <property type="match status" value="1"/>
</dbReference>
<dbReference type="PANTHER" id="PTHR35774">
    <property type="entry name" value="PHOTOSYSTEM II REACTION CENTER PROTEIN M"/>
    <property type="match status" value="1"/>
</dbReference>
<dbReference type="PANTHER" id="PTHR35774:SF1">
    <property type="entry name" value="PHOTOSYSTEM II REACTION CENTER PROTEIN M"/>
    <property type="match status" value="1"/>
</dbReference>
<dbReference type="Pfam" id="PF05151">
    <property type="entry name" value="PsbM"/>
    <property type="match status" value="1"/>
</dbReference>
<dbReference type="SUPFAM" id="SSF161033">
    <property type="entry name" value="Photosystem II reaction center protein M, PsbM"/>
    <property type="match status" value="1"/>
</dbReference>
<accession>A4QK99</accession>
<comment type="function">
    <text evidence="1">One of the components of the core complex of photosystem II (PSII). PSII is a light-driven water:plastoquinone oxidoreductase that uses light energy to abstract electrons from H(2)O, generating O(2) and a proton gradient subsequently used for ATP formation. It consists of a core antenna complex that captures photons, and an electron transfer chain that converts photonic excitation into a charge separation. This subunit is found at the monomer-monomer interface.</text>
</comment>
<comment type="subunit">
    <text evidence="1">PSII is composed of 1 copy each of membrane proteins PsbA, PsbB, PsbC, PsbD, PsbE, PsbF, PsbH, PsbI, PsbJ, PsbK, PsbL, PsbM, PsbT, PsbX, PsbY, PsbZ, Psb30/Ycf12, at least 3 peripheral proteins of the oxygen-evolving complex and a large number of cofactors. It forms dimeric complexes.</text>
</comment>
<comment type="subcellular location">
    <subcellularLocation>
        <location evidence="1">Plastid</location>
        <location evidence="1">Chloroplast thylakoid membrane</location>
        <topology evidence="1">Single-pass membrane protein</topology>
    </subcellularLocation>
</comment>
<comment type="similarity">
    <text evidence="1">Belongs to the PsbM family.</text>
</comment>